<feature type="chain" id="PRO_1000076213" description="Arginine--tRNA ligase">
    <location>
        <begin position="1"/>
        <end position="561"/>
    </location>
</feature>
<feature type="short sequence motif" description="'HIGH' region">
    <location>
        <begin position="136"/>
        <end position="146"/>
    </location>
</feature>
<name>SYR_DESRM</name>
<reference key="1">
    <citation type="submission" date="2007-03" db="EMBL/GenBank/DDBJ databases">
        <title>Complete sequence of Desulfotomaculum reducens MI-1.</title>
        <authorList>
            <consortium name="US DOE Joint Genome Institute"/>
            <person name="Copeland A."/>
            <person name="Lucas S."/>
            <person name="Lapidus A."/>
            <person name="Barry K."/>
            <person name="Detter J.C."/>
            <person name="Glavina del Rio T."/>
            <person name="Hammon N."/>
            <person name="Israni S."/>
            <person name="Dalin E."/>
            <person name="Tice H."/>
            <person name="Pitluck S."/>
            <person name="Sims D."/>
            <person name="Brettin T."/>
            <person name="Bruce D."/>
            <person name="Han C."/>
            <person name="Tapia R."/>
            <person name="Schmutz J."/>
            <person name="Larimer F."/>
            <person name="Land M."/>
            <person name="Hauser L."/>
            <person name="Kyrpides N."/>
            <person name="Kim E."/>
            <person name="Tebo B.M."/>
            <person name="Richardson P."/>
        </authorList>
    </citation>
    <scope>NUCLEOTIDE SEQUENCE [LARGE SCALE GENOMIC DNA]</scope>
    <source>
        <strain>ATCC BAA-1160 / DSM 100696 / MI-1</strain>
    </source>
</reference>
<sequence length="561" mass="63044">MQGLVENIKSSLAKALQVAIAGAVDKGQVNKLEIPEVIIEVPREKGHGDFATNLAMQLAKPAKMAPRKIAEAIIENLDLANTQVERVEIAGPGFINFYLQPSWVHGVIPMIIQEDRNYGRLELGDGQRVQVEFVSANPTGLLHMGNARGAALGDSLASILDFAGYRVSREYYINDAGNQIENFGKSLEVRYLQQLGQDIQLPEEGYHGEDIIDTVKGYINKNGRGLLDADQTTRRKTLAAYALQEKLTHIRNTLLDFGVVYDVWYSEQALHDSGAIQETLDELRQKGFIYEQENALWFKATAFGDEKDEVVVRSNGIPTYFAADIAYHKDKYKRGFDRVIDIWGADHHGHVNRMKGSMEALGHNRDNLQIILMQLVRLLRGGEVVRMSKRTGQFVTLEELVEEVGRDAARYFFVMRSPDSHLEFDLDLAKSQTNDNPVFYIQYAHARICSILRQLQEQGRPLPEIAAINPTVLKEEAELELLRKLADFPSEIAAAAEMMAPHRIARYLHDLAGLFHSFYNSHRVITENEAISEARLVLVQCVRIVLRNALGLLGLTAPEKM</sequence>
<accession>A4J9D2</accession>
<dbReference type="EC" id="6.1.1.19" evidence="1"/>
<dbReference type="EMBL" id="CP000612">
    <property type="protein sequence ID" value="ABO51685.1"/>
    <property type="molecule type" value="Genomic_DNA"/>
</dbReference>
<dbReference type="RefSeq" id="WP_011879473.1">
    <property type="nucleotide sequence ID" value="NC_009253.1"/>
</dbReference>
<dbReference type="SMR" id="A4J9D2"/>
<dbReference type="STRING" id="349161.Dred_3183"/>
<dbReference type="KEGG" id="drm:Dred_3183"/>
<dbReference type="eggNOG" id="COG0018">
    <property type="taxonomic scope" value="Bacteria"/>
</dbReference>
<dbReference type="HOGENOM" id="CLU_006406_0_1_9"/>
<dbReference type="OrthoDB" id="9805987at2"/>
<dbReference type="Proteomes" id="UP000001556">
    <property type="component" value="Chromosome"/>
</dbReference>
<dbReference type="GO" id="GO:0005737">
    <property type="term" value="C:cytoplasm"/>
    <property type="evidence" value="ECO:0007669"/>
    <property type="project" value="UniProtKB-SubCell"/>
</dbReference>
<dbReference type="GO" id="GO:0004814">
    <property type="term" value="F:arginine-tRNA ligase activity"/>
    <property type="evidence" value="ECO:0007669"/>
    <property type="project" value="UniProtKB-UniRule"/>
</dbReference>
<dbReference type="GO" id="GO:0005524">
    <property type="term" value="F:ATP binding"/>
    <property type="evidence" value="ECO:0007669"/>
    <property type="project" value="UniProtKB-UniRule"/>
</dbReference>
<dbReference type="GO" id="GO:0006420">
    <property type="term" value="P:arginyl-tRNA aminoacylation"/>
    <property type="evidence" value="ECO:0007669"/>
    <property type="project" value="UniProtKB-UniRule"/>
</dbReference>
<dbReference type="CDD" id="cd00671">
    <property type="entry name" value="ArgRS_core"/>
    <property type="match status" value="1"/>
</dbReference>
<dbReference type="FunFam" id="1.10.730.10:FF:000008">
    <property type="entry name" value="Arginine--tRNA ligase"/>
    <property type="match status" value="1"/>
</dbReference>
<dbReference type="FunFam" id="3.30.1360.70:FF:000003">
    <property type="entry name" value="Arginine--tRNA ligase"/>
    <property type="match status" value="1"/>
</dbReference>
<dbReference type="FunFam" id="3.40.50.620:FF:000062">
    <property type="entry name" value="Arginine--tRNA ligase"/>
    <property type="match status" value="1"/>
</dbReference>
<dbReference type="Gene3D" id="3.30.1360.70">
    <property type="entry name" value="Arginyl tRNA synthetase N-terminal domain"/>
    <property type="match status" value="1"/>
</dbReference>
<dbReference type="Gene3D" id="3.40.50.620">
    <property type="entry name" value="HUPs"/>
    <property type="match status" value="1"/>
</dbReference>
<dbReference type="Gene3D" id="1.10.730.10">
    <property type="entry name" value="Isoleucyl-tRNA Synthetase, Domain 1"/>
    <property type="match status" value="1"/>
</dbReference>
<dbReference type="HAMAP" id="MF_00123">
    <property type="entry name" value="Arg_tRNA_synth"/>
    <property type="match status" value="1"/>
</dbReference>
<dbReference type="InterPro" id="IPR001412">
    <property type="entry name" value="aa-tRNA-synth_I_CS"/>
</dbReference>
<dbReference type="InterPro" id="IPR001278">
    <property type="entry name" value="Arg-tRNA-ligase"/>
</dbReference>
<dbReference type="InterPro" id="IPR005148">
    <property type="entry name" value="Arg-tRNA-synth_N"/>
</dbReference>
<dbReference type="InterPro" id="IPR036695">
    <property type="entry name" value="Arg-tRNA-synth_N_sf"/>
</dbReference>
<dbReference type="InterPro" id="IPR035684">
    <property type="entry name" value="ArgRS_core"/>
</dbReference>
<dbReference type="InterPro" id="IPR008909">
    <property type="entry name" value="DALR_anticod-bd"/>
</dbReference>
<dbReference type="InterPro" id="IPR014729">
    <property type="entry name" value="Rossmann-like_a/b/a_fold"/>
</dbReference>
<dbReference type="InterPro" id="IPR009080">
    <property type="entry name" value="tRNAsynth_Ia_anticodon-bd"/>
</dbReference>
<dbReference type="NCBIfam" id="TIGR00456">
    <property type="entry name" value="argS"/>
    <property type="match status" value="1"/>
</dbReference>
<dbReference type="PANTHER" id="PTHR11956:SF5">
    <property type="entry name" value="ARGININE--TRNA LIGASE, CYTOPLASMIC"/>
    <property type="match status" value="1"/>
</dbReference>
<dbReference type="PANTHER" id="PTHR11956">
    <property type="entry name" value="ARGINYL-TRNA SYNTHETASE"/>
    <property type="match status" value="1"/>
</dbReference>
<dbReference type="Pfam" id="PF03485">
    <property type="entry name" value="Arg_tRNA_synt_N"/>
    <property type="match status" value="1"/>
</dbReference>
<dbReference type="Pfam" id="PF05746">
    <property type="entry name" value="DALR_1"/>
    <property type="match status" value="1"/>
</dbReference>
<dbReference type="Pfam" id="PF00750">
    <property type="entry name" value="tRNA-synt_1d"/>
    <property type="match status" value="1"/>
</dbReference>
<dbReference type="PRINTS" id="PR01038">
    <property type="entry name" value="TRNASYNTHARG"/>
</dbReference>
<dbReference type="SMART" id="SM01016">
    <property type="entry name" value="Arg_tRNA_synt_N"/>
    <property type="match status" value="1"/>
</dbReference>
<dbReference type="SMART" id="SM00836">
    <property type="entry name" value="DALR_1"/>
    <property type="match status" value="1"/>
</dbReference>
<dbReference type="SUPFAM" id="SSF47323">
    <property type="entry name" value="Anticodon-binding domain of a subclass of class I aminoacyl-tRNA synthetases"/>
    <property type="match status" value="1"/>
</dbReference>
<dbReference type="SUPFAM" id="SSF55190">
    <property type="entry name" value="Arginyl-tRNA synthetase (ArgRS), N-terminal 'additional' domain"/>
    <property type="match status" value="1"/>
</dbReference>
<dbReference type="SUPFAM" id="SSF52374">
    <property type="entry name" value="Nucleotidylyl transferase"/>
    <property type="match status" value="1"/>
</dbReference>
<dbReference type="PROSITE" id="PS00178">
    <property type="entry name" value="AA_TRNA_LIGASE_I"/>
    <property type="match status" value="1"/>
</dbReference>
<evidence type="ECO:0000255" key="1">
    <source>
        <dbReference type="HAMAP-Rule" id="MF_00123"/>
    </source>
</evidence>
<proteinExistence type="inferred from homology"/>
<organism>
    <name type="scientific">Desulforamulus reducens (strain ATCC BAA-1160 / DSM 100696 / MI-1)</name>
    <name type="common">Desulfotomaculum reducens</name>
    <dbReference type="NCBI Taxonomy" id="349161"/>
    <lineage>
        <taxon>Bacteria</taxon>
        <taxon>Bacillati</taxon>
        <taxon>Bacillota</taxon>
        <taxon>Clostridia</taxon>
        <taxon>Eubacteriales</taxon>
        <taxon>Peptococcaceae</taxon>
        <taxon>Desulforamulus</taxon>
    </lineage>
</organism>
<comment type="catalytic activity">
    <reaction evidence="1">
        <text>tRNA(Arg) + L-arginine + ATP = L-arginyl-tRNA(Arg) + AMP + diphosphate</text>
        <dbReference type="Rhea" id="RHEA:20301"/>
        <dbReference type="Rhea" id="RHEA-COMP:9658"/>
        <dbReference type="Rhea" id="RHEA-COMP:9673"/>
        <dbReference type="ChEBI" id="CHEBI:30616"/>
        <dbReference type="ChEBI" id="CHEBI:32682"/>
        <dbReference type="ChEBI" id="CHEBI:33019"/>
        <dbReference type="ChEBI" id="CHEBI:78442"/>
        <dbReference type="ChEBI" id="CHEBI:78513"/>
        <dbReference type="ChEBI" id="CHEBI:456215"/>
        <dbReference type="EC" id="6.1.1.19"/>
    </reaction>
</comment>
<comment type="subunit">
    <text evidence="1">Monomer.</text>
</comment>
<comment type="subcellular location">
    <subcellularLocation>
        <location evidence="1">Cytoplasm</location>
    </subcellularLocation>
</comment>
<comment type="similarity">
    <text evidence="1">Belongs to the class-I aminoacyl-tRNA synthetase family.</text>
</comment>
<protein>
    <recommendedName>
        <fullName evidence="1">Arginine--tRNA ligase</fullName>
        <ecNumber evidence="1">6.1.1.19</ecNumber>
    </recommendedName>
    <alternativeName>
        <fullName evidence="1">Arginyl-tRNA synthetase</fullName>
        <shortName evidence="1">ArgRS</shortName>
    </alternativeName>
</protein>
<keyword id="KW-0030">Aminoacyl-tRNA synthetase</keyword>
<keyword id="KW-0067">ATP-binding</keyword>
<keyword id="KW-0963">Cytoplasm</keyword>
<keyword id="KW-0436">Ligase</keyword>
<keyword id="KW-0547">Nucleotide-binding</keyword>
<keyword id="KW-0648">Protein biosynthesis</keyword>
<keyword id="KW-1185">Reference proteome</keyword>
<gene>
    <name evidence="1" type="primary">argS</name>
    <name type="ordered locus">Dred_3183</name>
</gene>